<keyword id="KW-0002">3D-structure</keyword>
<keyword id="KW-0007">Acetylation</keyword>
<keyword id="KW-0025">Alternative splicing</keyword>
<keyword id="KW-0072">Autophagy</keyword>
<keyword id="KW-0175">Coiled coil</keyword>
<keyword id="KW-1026">Leukodystrophy</keyword>
<keyword id="KW-0446">Lipid-binding</keyword>
<keyword id="KW-0472">Membrane</keyword>
<keyword id="KW-0576">Peroxisome</keyword>
<keyword id="KW-0597">Phosphoprotein</keyword>
<keyword id="KW-1267">Proteomics identification</keyword>
<keyword id="KW-1185">Reference proteome</keyword>
<keyword id="KW-0812">Transmembrane</keyword>
<keyword id="KW-1133">Transmembrane helix</keyword>
<keyword id="KW-0813">Transport</keyword>
<protein>
    <recommendedName>
        <fullName>Acyl-CoA-binding domain-containing protein 5</fullName>
    </recommendedName>
</protein>
<proteinExistence type="evidence at protein level"/>
<feature type="chain" id="PRO_0000287377" description="Acyl-CoA-binding domain-containing protein 5">
    <location>
        <begin position="1"/>
        <end position="534"/>
    </location>
</feature>
<feature type="transmembrane region" description="Helical" evidence="3">
    <location>
        <begin position="506"/>
        <end position="526"/>
    </location>
</feature>
<feature type="domain" description="ACB" evidence="4">
    <location>
        <begin position="41"/>
        <end position="130"/>
    </location>
</feature>
<feature type="region of interest" description="Disordered" evidence="5">
    <location>
        <begin position="181"/>
        <end position="225"/>
    </location>
</feature>
<feature type="region of interest" description="Disordered" evidence="5">
    <location>
        <begin position="376"/>
        <end position="442"/>
    </location>
</feature>
<feature type="coiled-coil region" evidence="3">
    <location>
        <begin position="190"/>
        <end position="219"/>
    </location>
</feature>
<feature type="coiled-coil region" evidence="3">
    <location>
        <begin position="447"/>
        <end position="476"/>
    </location>
</feature>
<feature type="compositionally biased region" description="Basic and acidic residues" evidence="5">
    <location>
        <begin position="207"/>
        <end position="225"/>
    </location>
</feature>
<feature type="compositionally biased region" description="Basic and acidic residues" evidence="5">
    <location>
        <begin position="376"/>
        <end position="385"/>
    </location>
</feature>
<feature type="compositionally biased region" description="Basic and acidic residues" evidence="5">
    <location>
        <begin position="431"/>
        <end position="441"/>
    </location>
</feature>
<feature type="binding site">
    <location>
        <begin position="52"/>
        <end position="61"/>
    </location>
    <ligand>
        <name>an acyl-CoA</name>
        <dbReference type="ChEBI" id="CHEBI:58342"/>
    </ligand>
</feature>
<feature type="binding site">
    <location>
        <begin position="72"/>
        <end position="76"/>
    </location>
    <ligand>
        <name>an acyl-CoA</name>
        <dbReference type="ChEBI" id="CHEBI:58342"/>
    </ligand>
</feature>
<feature type="binding site">
    <location>
        <position position="98"/>
    </location>
    <ligand>
        <name>an acyl-CoA</name>
        <dbReference type="ChEBI" id="CHEBI:58342"/>
    </ligand>
</feature>
<feature type="binding site" evidence="1">
    <location>
        <position position="117"/>
    </location>
    <ligand>
        <name>an acyl-CoA</name>
        <dbReference type="ChEBI" id="CHEBI:58342"/>
    </ligand>
</feature>
<feature type="modified residue" description="Phosphoserine" evidence="15">
    <location>
        <position position="193"/>
    </location>
</feature>
<feature type="modified residue" description="Phosphoserine" evidence="15">
    <location>
        <position position="194"/>
    </location>
</feature>
<feature type="modified residue" description="Phosphoserine" evidence="15">
    <location>
        <position position="196"/>
    </location>
</feature>
<feature type="modified residue" description="Phosphoserine" evidence="13 14 15 16 18">
    <location>
        <position position="200"/>
    </location>
</feature>
<feature type="modified residue" description="Phosphoserine" evidence="19">
    <location>
        <position position="215"/>
    </location>
</feature>
<feature type="modified residue" description="Phosphoserine" evidence="19">
    <location>
        <position position="279"/>
    </location>
</feature>
<feature type="modified residue" description="Phosphoserine" evidence="19">
    <location>
        <position position="313"/>
    </location>
</feature>
<feature type="modified residue" description="Phosphothreonine" evidence="16">
    <location>
        <position position="400"/>
    </location>
</feature>
<feature type="modified residue" description="Phosphoserine" evidence="16">
    <location>
        <position position="428"/>
    </location>
</feature>
<feature type="modified residue" description="N6-acetyllysine" evidence="2">
    <location>
        <position position="469"/>
    </location>
</feature>
<feature type="splice variant" id="VSP_025448" description="In isoform 4." evidence="11">
    <location>
        <begin position="1"/>
        <end position="107"/>
    </location>
</feature>
<feature type="splice variant" id="VSP_025447" description="In isoform 2." evidence="9">
    <location>
        <begin position="1"/>
        <end position="33"/>
    </location>
</feature>
<feature type="splice variant" id="VSP_025446" description="In isoform 3." evidence="10">
    <original>MFQ</original>
    <variation>MLFLS</variation>
    <location>
        <begin position="1"/>
        <end position="3"/>
    </location>
</feature>
<feature type="splice variant" id="VSP_025449" description="In isoform 2, isoform 3 and isoform 4." evidence="9 10 11">
    <location>
        <begin position="162"/>
        <end position="172"/>
    </location>
</feature>
<feature type="sequence variant" id="VAR_032301" description="In dbSNP:rs7918793.">
    <original>T</original>
    <variation>M</variation>
    <location>
        <position position="472"/>
    </location>
</feature>
<feature type="sequence conflict" description="In Ref. 1; AAP30852." evidence="12" ref="1">
    <original>P</original>
    <variation>Q</variation>
    <location>
        <position position="332"/>
    </location>
</feature>
<feature type="sequence conflict" description="In Ref. 1; AAP30852." evidence="12" ref="1">
    <original>E</original>
    <variation>D</variation>
    <location>
        <position position="419"/>
    </location>
</feature>
<feature type="sequence conflict" description="In Ref. 1; AAP30852." evidence="12" ref="1">
    <original>A</original>
    <variation>T</variation>
    <location>
        <position position="478"/>
    </location>
</feature>
<feature type="helix" evidence="20">
    <location>
        <begin position="41"/>
        <end position="58"/>
    </location>
</feature>
<feature type="helix" evidence="20">
    <location>
        <begin position="65"/>
        <end position="79"/>
    </location>
</feature>
<feature type="helix" evidence="20">
    <location>
        <begin position="93"/>
        <end position="104"/>
    </location>
</feature>
<feature type="turn" evidence="20">
    <location>
        <begin position="105"/>
        <end position="107"/>
    </location>
</feature>
<feature type="helix" evidence="20">
    <location>
        <begin position="110"/>
        <end position="127"/>
    </location>
</feature>
<feature type="modified residue" description="Phosphothreonine" evidence="15 17">
    <location sequence="Q5T8D3-2">
        <position position="137"/>
    </location>
</feature>
<feature type="modified residue" description="Phosphothreonine" evidence="15 17">
    <location sequence="Q5T8D3-3">
        <position position="172"/>
    </location>
</feature>
<feature type="modified residue" description="Phosphothreonine" evidence="15 17">
    <location sequence="Q5T8D3-4">
        <position position="63"/>
    </location>
</feature>
<dbReference type="EMBL" id="AF505653">
    <property type="protein sequence ID" value="AAP30852.1"/>
    <property type="molecule type" value="mRNA"/>
</dbReference>
<dbReference type="EMBL" id="AK057469">
    <property type="protein sequence ID" value="BAG51918.1"/>
    <property type="molecule type" value="mRNA"/>
</dbReference>
<dbReference type="EMBL" id="AL160291">
    <property type="status" value="NOT_ANNOTATED_CDS"/>
    <property type="molecule type" value="Genomic_DNA"/>
</dbReference>
<dbReference type="EMBL" id="CH471072">
    <property type="protein sequence ID" value="EAW86062.1"/>
    <property type="molecule type" value="Genomic_DNA"/>
</dbReference>
<dbReference type="EMBL" id="CH471072">
    <property type="protein sequence ID" value="EAW86061.1"/>
    <property type="molecule type" value="Genomic_DNA"/>
</dbReference>
<dbReference type="EMBL" id="CH471072">
    <property type="protein sequence ID" value="EAW86063.1"/>
    <property type="molecule type" value="Genomic_DNA"/>
</dbReference>
<dbReference type="EMBL" id="BC030555">
    <property type="protein sequence ID" value="AAH30555.1"/>
    <property type="status" value="ALT_INIT"/>
    <property type="molecule type" value="mRNA"/>
</dbReference>
<dbReference type="EMBL" id="AL133064">
    <property type="protein sequence ID" value="CAB61388.1"/>
    <property type="molecule type" value="mRNA"/>
</dbReference>
<dbReference type="CCDS" id="CCDS44368.1">
    <molecule id="Q5T8D3-3"/>
</dbReference>
<dbReference type="CCDS" id="CCDS7154.1">
    <molecule id="Q5T8D3-2"/>
</dbReference>
<dbReference type="CCDS" id="CCDS76290.1">
    <molecule id="Q5T8D3-4"/>
</dbReference>
<dbReference type="CCDS" id="CCDS86078.1">
    <molecule id="Q5T8D3-1"/>
</dbReference>
<dbReference type="PIR" id="T42665">
    <property type="entry name" value="T42665"/>
</dbReference>
<dbReference type="RefSeq" id="NP_001035938.1">
    <molecule id="Q5T8D3-2"/>
    <property type="nucleotide sequence ID" value="NM_001042473.4"/>
</dbReference>
<dbReference type="RefSeq" id="NP_001288180.1">
    <molecule id="Q5T8D3-4"/>
    <property type="nucleotide sequence ID" value="NM_001301251.2"/>
</dbReference>
<dbReference type="RefSeq" id="NP_001288181.1">
    <molecule id="Q5T8D3-4"/>
    <property type="nucleotide sequence ID" value="NM_001301252.2"/>
</dbReference>
<dbReference type="RefSeq" id="NP_001288182.1">
    <molecule id="Q5T8D3-4"/>
    <property type="nucleotide sequence ID" value="NM_001301253.2"/>
</dbReference>
<dbReference type="RefSeq" id="NP_001339500.1">
    <molecule id="Q5T8D3-1"/>
    <property type="nucleotide sequence ID" value="NM_001352571.1"/>
</dbReference>
<dbReference type="RefSeq" id="NP_001339506.1">
    <molecule id="Q5T8D3-2"/>
    <property type="nucleotide sequence ID" value="NM_001352577.2"/>
</dbReference>
<dbReference type="RefSeq" id="NP_001339507.1">
    <molecule id="Q5T8D3-2"/>
    <property type="nucleotide sequence ID" value="NM_001352578.2"/>
</dbReference>
<dbReference type="RefSeq" id="NP_001339508.1">
    <molecule id="Q5T8D3-2"/>
    <property type="nucleotide sequence ID" value="NM_001352579.2"/>
</dbReference>
<dbReference type="RefSeq" id="NP_001339512.1">
    <molecule id="Q5T8D3-4"/>
    <property type="nucleotide sequence ID" value="NM_001352583.1"/>
</dbReference>
<dbReference type="RefSeq" id="NP_001339513.1">
    <molecule id="Q5T8D3-4"/>
    <property type="nucleotide sequence ID" value="NM_001352584.1"/>
</dbReference>
<dbReference type="RefSeq" id="NP_663736.2">
    <molecule id="Q5T8D3-3"/>
    <property type="nucleotide sequence ID" value="NM_145698.5"/>
</dbReference>
<dbReference type="RefSeq" id="XP_016872396.1">
    <property type="nucleotide sequence ID" value="XM_017016907.1"/>
</dbReference>
<dbReference type="RefSeq" id="XP_016872397.1">
    <property type="nucleotide sequence ID" value="XM_017016908.1"/>
</dbReference>
<dbReference type="PDB" id="3FLV">
    <property type="method" value="X-ray"/>
    <property type="resolution" value="1.70 A"/>
    <property type="chains" value="A/B=41-136"/>
</dbReference>
<dbReference type="PDBsum" id="3FLV"/>
<dbReference type="SMR" id="Q5T8D3"/>
<dbReference type="BioGRID" id="124836">
    <property type="interactions" value="226"/>
</dbReference>
<dbReference type="CORUM" id="Q5T8D3"/>
<dbReference type="FunCoup" id="Q5T8D3">
    <property type="interactions" value="2305"/>
</dbReference>
<dbReference type="IntAct" id="Q5T8D3">
    <property type="interactions" value="33"/>
</dbReference>
<dbReference type="MINT" id="Q5T8D3"/>
<dbReference type="STRING" id="9606.ENSP00000365049"/>
<dbReference type="TCDB" id="1.R.1.1.1">
    <property type="family name" value="the membrane contact site (mcs) family"/>
</dbReference>
<dbReference type="GlyGen" id="Q5T8D3">
    <property type="glycosylation" value="2 sites, 1 N-linked glycan (1 site), 1 O-linked glycan (1 site)"/>
</dbReference>
<dbReference type="iPTMnet" id="Q5T8D3"/>
<dbReference type="PhosphoSitePlus" id="Q5T8D3"/>
<dbReference type="SwissPalm" id="Q5T8D3"/>
<dbReference type="BioMuta" id="ACBD5"/>
<dbReference type="DMDM" id="74745508"/>
<dbReference type="jPOST" id="Q5T8D3"/>
<dbReference type="MassIVE" id="Q5T8D3"/>
<dbReference type="PaxDb" id="9606-ENSP00000379568"/>
<dbReference type="PeptideAtlas" id="Q5T8D3"/>
<dbReference type="ProteomicsDB" id="64724">
    <molecule id="Q5T8D3-1"/>
</dbReference>
<dbReference type="ProteomicsDB" id="64725">
    <molecule id="Q5T8D3-2"/>
</dbReference>
<dbReference type="ProteomicsDB" id="64726">
    <molecule id="Q5T8D3-3"/>
</dbReference>
<dbReference type="ProteomicsDB" id="64727">
    <molecule id="Q5T8D3-4"/>
</dbReference>
<dbReference type="Pumba" id="Q5T8D3"/>
<dbReference type="Antibodypedia" id="2333">
    <property type="antibodies" value="123 antibodies from 23 providers"/>
</dbReference>
<dbReference type="DNASU" id="91452"/>
<dbReference type="Ensembl" id="ENST00000375888.5">
    <molecule id="Q5T8D3-1"/>
    <property type="protein sequence ID" value="ENSP00000365049.1"/>
    <property type="gene ID" value="ENSG00000107897.20"/>
</dbReference>
<dbReference type="Ensembl" id="ENST00000375901.5">
    <molecule id="Q5T8D3-4"/>
    <property type="protein sequence ID" value="ENSP00000365066.1"/>
    <property type="gene ID" value="ENSG00000107897.20"/>
</dbReference>
<dbReference type="Ensembl" id="ENST00000375905.8">
    <molecule id="Q5T8D3-2"/>
    <property type="protein sequence ID" value="ENSP00000365070.4"/>
    <property type="gene ID" value="ENSG00000107897.20"/>
</dbReference>
<dbReference type="Ensembl" id="ENST00000396271.8">
    <molecule id="Q5T8D3-3"/>
    <property type="protein sequence ID" value="ENSP00000379568.3"/>
    <property type="gene ID" value="ENSG00000107897.20"/>
</dbReference>
<dbReference type="Ensembl" id="ENST00000679293.1">
    <molecule id="Q5T8D3-2"/>
    <property type="protein sequence ID" value="ENSP00000503631.1"/>
    <property type="gene ID" value="ENSG00000107897.20"/>
</dbReference>
<dbReference type="GeneID" id="91452"/>
<dbReference type="KEGG" id="hsa:91452"/>
<dbReference type="MANE-Select" id="ENST00000396271.8">
    <molecule id="Q5T8D3-3"/>
    <property type="protein sequence ID" value="ENSP00000379568.3"/>
    <property type="RefSeq nucleotide sequence ID" value="NM_145698.5"/>
    <property type="RefSeq protein sequence ID" value="NP_663736.2"/>
</dbReference>
<dbReference type="UCSC" id="uc001ito.4">
    <molecule id="Q5T8D3-1"/>
    <property type="organism name" value="human"/>
</dbReference>
<dbReference type="AGR" id="HGNC:23338"/>
<dbReference type="CTD" id="91452"/>
<dbReference type="DisGeNET" id="91452"/>
<dbReference type="GeneCards" id="ACBD5"/>
<dbReference type="HGNC" id="HGNC:23338">
    <property type="gene designation" value="ACBD5"/>
</dbReference>
<dbReference type="HPA" id="ENSG00000107897">
    <property type="expression patterns" value="Low tissue specificity"/>
</dbReference>
<dbReference type="MalaCards" id="ACBD5"/>
<dbReference type="MIM" id="616618">
    <property type="type" value="gene"/>
</dbReference>
<dbReference type="MIM" id="618863">
    <property type="type" value="phenotype"/>
</dbReference>
<dbReference type="neXtProt" id="NX_Q5T8D3"/>
<dbReference type="OpenTargets" id="ENSG00000107897"/>
<dbReference type="PharmGKB" id="PA134892991"/>
<dbReference type="VEuPathDB" id="HostDB:ENSG00000107897"/>
<dbReference type="eggNOG" id="KOG0817">
    <property type="taxonomic scope" value="Eukaryota"/>
</dbReference>
<dbReference type="GeneTree" id="ENSGT00940000156350"/>
<dbReference type="HOGENOM" id="CLU_034436_0_0_1"/>
<dbReference type="InParanoid" id="Q5T8D3"/>
<dbReference type="OMA" id="RNPSWWP"/>
<dbReference type="OrthoDB" id="71307at2759"/>
<dbReference type="PAN-GO" id="Q5T8D3">
    <property type="GO annotations" value="4 GO annotations based on evolutionary models"/>
</dbReference>
<dbReference type="PhylomeDB" id="Q5T8D3"/>
<dbReference type="TreeFam" id="TF319446"/>
<dbReference type="PathwayCommons" id="Q5T8D3"/>
<dbReference type="Reactome" id="R-HSA-390918">
    <property type="pathway name" value="Peroxisomal lipid metabolism"/>
</dbReference>
<dbReference type="Reactome" id="R-HSA-8980692">
    <property type="pathway name" value="RHOA GTPase cycle"/>
</dbReference>
<dbReference type="Reactome" id="R-HSA-9013106">
    <property type="pathway name" value="RHOC GTPase cycle"/>
</dbReference>
<dbReference type="Reactome" id="R-HSA-9603798">
    <property type="pathway name" value="Class I peroxisomal membrane protein import"/>
</dbReference>
<dbReference type="SignaLink" id="Q5T8D3"/>
<dbReference type="BioGRID-ORCS" id="91452">
    <property type="hits" value="14 hits in 1159 CRISPR screens"/>
</dbReference>
<dbReference type="CD-CODE" id="DEE660B4">
    <property type="entry name" value="Stress granule"/>
</dbReference>
<dbReference type="CD-CODE" id="FB4E32DD">
    <property type="entry name" value="Presynaptic clusters and postsynaptic densities"/>
</dbReference>
<dbReference type="ChiTaRS" id="ACBD5">
    <property type="organism name" value="human"/>
</dbReference>
<dbReference type="EvolutionaryTrace" id="Q5T8D3"/>
<dbReference type="GenomeRNAi" id="91452"/>
<dbReference type="Pharos" id="Q5T8D3">
    <property type="development level" value="Tbio"/>
</dbReference>
<dbReference type="PRO" id="PR:Q5T8D3"/>
<dbReference type="Proteomes" id="UP000005640">
    <property type="component" value="Chromosome 10"/>
</dbReference>
<dbReference type="RNAct" id="Q5T8D3">
    <property type="molecule type" value="protein"/>
</dbReference>
<dbReference type="Bgee" id="ENSG00000107897">
    <property type="expression patterns" value="Expressed in jejunal mucosa and 191 other cell types or tissues"/>
</dbReference>
<dbReference type="ExpressionAtlas" id="Q5T8D3">
    <property type="expression patterns" value="baseline and differential"/>
</dbReference>
<dbReference type="GO" id="GO:0005737">
    <property type="term" value="C:cytoplasm"/>
    <property type="evidence" value="ECO:0000318"/>
    <property type="project" value="GO_Central"/>
</dbReference>
<dbReference type="GO" id="GO:0005829">
    <property type="term" value="C:cytosol"/>
    <property type="evidence" value="ECO:0000304"/>
    <property type="project" value="Reactome"/>
</dbReference>
<dbReference type="GO" id="GO:0016020">
    <property type="term" value="C:membrane"/>
    <property type="evidence" value="ECO:0007005"/>
    <property type="project" value="UniProtKB"/>
</dbReference>
<dbReference type="GO" id="GO:0005654">
    <property type="term" value="C:nucleoplasm"/>
    <property type="evidence" value="ECO:0000314"/>
    <property type="project" value="HPA"/>
</dbReference>
<dbReference type="GO" id="GO:0005778">
    <property type="term" value="C:peroxisomal membrane"/>
    <property type="evidence" value="ECO:0000304"/>
    <property type="project" value="Reactome"/>
</dbReference>
<dbReference type="GO" id="GO:0005777">
    <property type="term" value="C:peroxisome"/>
    <property type="evidence" value="ECO:0000314"/>
    <property type="project" value="HPA"/>
</dbReference>
<dbReference type="GO" id="GO:0000062">
    <property type="term" value="F:fatty-acyl-CoA binding"/>
    <property type="evidence" value="ECO:0000318"/>
    <property type="project" value="GO_Central"/>
</dbReference>
<dbReference type="GO" id="GO:0009062">
    <property type="term" value="P:fatty acid catabolic process"/>
    <property type="evidence" value="ECO:0000304"/>
    <property type="project" value="Reactome"/>
</dbReference>
<dbReference type="GO" id="GO:0006631">
    <property type="term" value="P:fatty acid metabolic process"/>
    <property type="evidence" value="ECO:0000318"/>
    <property type="project" value="GO_Central"/>
</dbReference>
<dbReference type="GO" id="GO:0000425">
    <property type="term" value="P:pexophagy"/>
    <property type="evidence" value="ECO:0000315"/>
    <property type="project" value="UniProtKB"/>
</dbReference>
<dbReference type="CDD" id="cd00435">
    <property type="entry name" value="ACBP"/>
    <property type="match status" value="1"/>
</dbReference>
<dbReference type="FunFam" id="1.20.80.10:FF:000010">
    <property type="entry name" value="Acyl-CoA-binding domain-containing protein 5"/>
    <property type="match status" value="1"/>
</dbReference>
<dbReference type="Gene3D" id="1.20.80.10">
    <property type="match status" value="1"/>
</dbReference>
<dbReference type="InterPro" id="IPR016347">
    <property type="entry name" value="ACBD5"/>
</dbReference>
<dbReference type="InterPro" id="IPR022408">
    <property type="entry name" value="Acyl-CoA-binding_prot_CS"/>
</dbReference>
<dbReference type="InterPro" id="IPR000582">
    <property type="entry name" value="Acyl-CoA-binding_protein"/>
</dbReference>
<dbReference type="InterPro" id="IPR035984">
    <property type="entry name" value="Acyl-CoA-binding_sf"/>
</dbReference>
<dbReference type="InterPro" id="IPR014352">
    <property type="entry name" value="FERM/acyl-CoA-bd_prot_sf"/>
</dbReference>
<dbReference type="PANTHER" id="PTHR23310:SF6">
    <property type="entry name" value="ACYL-COA-BINDING DOMAIN-CONTAINING PROTEIN 5"/>
    <property type="match status" value="1"/>
</dbReference>
<dbReference type="PANTHER" id="PTHR23310">
    <property type="entry name" value="ACYL-COA-BINDING PROTEIN, ACBP"/>
    <property type="match status" value="1"/>
</dbReference>
<dbReference type="Pfam" id="PF00887">
    <property type="entry name" value="ACBP"/>
    <property type="match status" value="1"/>
</dbReference>
<dbReference type="PIRSF" id="PIRSF002412">
    <property type="entry name" value="MA_DBI"/>
    <property type="match status" value="1"/>
</dbReference>
<dbReference type="PRINTS" id="PR00689">
    <property type="entry name" value="ACOABINDINGP"/>
</dbReference>
<dbReference type="SUPFAM" id="SSF47027">
    <property type="entry name" value="Acyl-CoA binding protein"/>
    <property type="match status" value="1"/>
</dbReference>
<dbReference type="PROSITE" id="PS00880">
    <property type="entry name" value="ACB_1"/>
    <property type="match status" value="1"/>
</dbReference>
<dbReference type="PROSITE" id="PS51228">
    <property type="entry name" value="ACB_2"/>
    <property type="match status" value="1"/>
</dbReference>
<name>ACBD5_HUMAN</name>
<accession>Q5T8D3</accession>
<accession>B3KQ56</accession>
<accession>D3DRW0</accession>
<accession>Q5T8D4</accession>
<accession>Q5T8E1</accession>
<accession>Q5T8E2</accession>
<accession>Q86UV1</accession>
<accession>Q8N6E3</accession>
<accession>Q9UFB5</accession>
<gene>
    <name type="primary">ACBD5</name>
    <name type="synonym">KIAA1996</name>
</gene>
<sequence>MFQFHAGSWESWCCCCLIPADRPWDRGQHWQLEMADTRSVHETRFEAAVKVIQSLPKNGSFQPTNEMMLKFYSFYKQATEGPCKLSRPGFWDPIGRYKWDAWSSLGDMTKEEAMIAYVEEMKKIIETMPMTEKVEELLRVIGPFYEIVEDKKSGRSSDITSVRLEKISKCLEDLGNVLTSTPNAKTVNGKAESSDSGAESEEEEAQEEVKGAEQSDNDKKMMKKSADHKNLEVIVTNGYDKDGFVQDIQNDIHASSSLNGRSTEEVKPIDENLGQTGKSAVCIHQDINDDHVEDVTGIQHLTSDSDSEVYCDSMEQFGQEESLDSFTSNNGPFQYYLGGHSSQPMENSGFREDIQVPPGNGNIGNMQVVAVEGKGEVKHGGEDGRNNSGAPHREKRGGETDEFSNVRRGRGHRMQHLSEGTKGRQVGSGGDGERWGSDRGSRGSLNEQIALVLMRLQEDMQNVLQRLQKLETLTALQAKSSTSTLQTAPQPTSQRPSWWPFEMSPGVLTFAIIWPFIAQWLVYLYYQRRRRKLN</sequence>
<evidence type="ECO:0000250" key="1"/>
<evidence type="ECO:0000250" key="2">
    <source>
        <dbReference type="UniProtKB" id="Q5XG73"/>
    </source>
</evidence>
<evidence type="ECO:0000255" key="3"/>
<evidence type="ECO:0000255" key="4">
    <source>
        <dbReference type="PROSITE-ProRule" id="PRU00573"/>
    </source>
</evidence>
<evidence type="ECO:0000256" key="5">
    <source>
        <dbReference type="SAM" id="MobiDB-lite"/>
    </source>
</evidence>
<evidence type="ECO:0000269" key="6">
    <source>
    </source>
</evidence>
<evidence type="ECO:0000269" key="7">
    <source>
    </source>
</evidence>
<evidence type="ECO:0000269" key="8">
    <source>
    </source>
</evidence>
<evidence type="ECO:0000303" key="9">
    <source>
    </source>
</evidence>
<evidence type="ECO:0000303" key="10">
    <source>
    </source>
</evidence>
<evidence type="ECO:0000303" key="11">
    <source ref="1"/>
</evidence>
<evidence type="ECO:0000305" key="12"/>
<evidence type="ECO:0007744" key="13">
    <source>
    </source>
</evidence>
<evidence type="ECO:0007744" key="14">
    <source>
    </source>
</evidence>
<evidence type="ECO:0007744" key="15">
    <source>
    </source>
</evidence>
<evidence type="ECO:0007744" key="16">
    <source>
    </source>
</evidence>
<evidence type="ECO:0007744" key="17">
    <source>
    </source>
</evidence>
<evidence type="ECO:0007744" key="18">
    <source>
    </source>
</evidence>
<evidence type="ECO:0007744" key="19">
    <source>
    </source>
</evidence>
<evidence type="ECO:0007829" key="20">
    <source>
        <dbReference type="PDB" id="3FLV"/>
    </source>
</evidence>
<comment type="function">
    <text evidence="7">Acyl-CoA binding protein which acts as the peroxisome receptor for pexophagy but is dispensable for aggrephagy and nonselective autophagy. Binds medium- and long-chain acyl-CoA esters.</text>
</comment>
<comment type="interaction">
    <interactant intactId="EBI-10961679">
        <id>Q5T8D3-2</id>
    </interactant>
    <interactant intactId="EBI-10232876">
        <id>Q14416</id>
        <label>GRM2</label>
    </interactant>
    <organismsDiffer>false</organismsDiffer>
    <experiments>3</experiments>
</comment>
<comment type="interaction">
    <interactant intactId="EBI-10961679">
        <id>Q5T8D3-2</id>
    </interactant>
    <interactant intactId="EBI-10314552">
        <id>Q9NVC3</id>
        <label>SLC38A7</label>
    </interactant>
    <organismsDiffer>false</organismsDiffer>
    <experiments>3</experiments>
</comment>
<comment type="interaction">
    <interactant intactId="EBI-10961679">
        <id>Q5T8D3-2</id>
    </interactant>
    <interactant intactId="EBI-9071709">
        <id>P61266</id>
        <label>STX1B</label>
    </interactant>
    <organismsDiffer>false</organismsDiffer>
    <experiments>3</experiments>
</comment>
<comment type="interaction">
    <interactant intactId="EBI-10961679">
        <id>Q5T8D3-2</id>
    </interactant>
    <interactant intactId="EBI-12195227">
        <id>Q8NBD8</id>
        <label>TMEM229B</label>
    </interactant>
    <organismsDiffer>false</organismsDiffer>
    <experiments>3</experiments>
</comment>
<comment type="subcellular location">
    <subcellularLocation>
        <location evidence="1">Peroxisome membrane</location>
        <topology evidence="1">Single-pass membrane protein</topology>
    </subcellularLocation>
</comment>
<comment type="alternative products">
    <event type="alternative splicing"/>
    <isoform>
        <id>Q5T8D3-1</id>
        <name>1</name>
        <sequence type="displayed"/>
    </isoform>
    <isoform>
        <id>Q5T8D3-2</id>
        <name>2</name>
        <sequence type="described" ref="VSP_025447 VSP_025449"/>
    </isoform>
    <isoform>
        <id>Q5T8D3-3</id>
        <name>3</name>
        <sequence type="described" ref="VSP_025446 VSP_025449"/>
    </isoform>
    <isoform>
        <id>Q5T8D3-4</id>
        <name>4</name>
        <sequence type="described" ref="VSP_025448 VSP_025449"/>
    </isoform>
</comment>
<comment type="disease" evidence="6 8">
    <disease id="DI-05818">
        <name>Retinal dystrophy with leukodystrophy</name>
        <acronym>RDLKD</acronym>
        <description>An autosomal recessive disorder characterized by progressive leukodystrophy associated with developmental delay, spastic paraparesis, ataxia, and retinal dystrophy. Patients may show facial dysmorphism. Laboratory investigations reveal an abnormal profile of very-long chain fatty acid in plasma.</description>
        <dbReference type="MIM" id="618863"/>
    </disease>
    <text>The disease is caused by variants affecting the gene represented in this entry.</text>
</comment>
<comment type="similarity">
    <text evidence="12">Belongs to the ATG37 family.</text>
</comment>
<comment type="sequence caution" evidence="12">
    <conflict type="erroneous initiation">
        <sequence resource="EMBL-CDS" id="AAH30555"/>
    </conflict>
    <text>Truncated N-terminus.</text>
</comment>
<reference key="1">
    <citation type="submission" date="2002-04" db="EMBL/GenBank/DDBJ databases">
        <title>Functional research of a new human gene related to endozepine.</title>
        <authorList>
            <person name="Ye X."/>
            <person name="Mao Y."/>
            <person name="Xie Y."/>
        </authorList>
    </citation>
    <scope>NUCLEOTIDE SEQUENCE [LARGE SCALE MRNA] (ISOFORM 4)</scope>
</reference>
<reference key="2">
    <citation type="journal article" date="2006" name="Cell">
        <title>Global, in vivo, and site-specific phosphorylation dynamics in signaling networks.</title>
        <authorList>
            <person name="Olsen J.V."/>
            <person name="Blagoev B."/>
            <person name="Gnad F."/>
            <person name="Macek B."/>
            <person name="Kumar C."/>
            <person name="Mortensen P."/>
            <person name="Mann M."/>
        </authorList>
    </citation>
    <scope>PHOSPHORYLATION [LARGE SCALE ANALYSIS] AT SER-200</scope>
    <scope>IDENTIFICATION BY MASS SPECTROMETRY [LARGE SCALE ANALYSIS]</scope>
    <source>
        <tissue>Cervix carcinoma</tissue>
    </source>
</reference>
<reference key="3">
    <citation type="journal article" date="2008" name="Mol. Cell">
        <title>Kinase-selective enrichment enables quantitative phosphoproteomics of the kinome across the cell cycle.</title>
        <authorList>
            <person name="Daub H."/>
            <person name="Olsen J.V."/>
            <person name="Bairlein M."/>
            <person name="Gnad F."/>
            <person name="Oppermann F.S."/>
            <person name="Korner R."/>
            <person name="Greff Z."/>
            <person name="Keri G."/>
            <person name="Stemmann O."/>
            <person name="Mann M."/>
        </authorList>
    </citation>
    <scope>PHOSPHORYLATION [LARGE SCALE ANALYSIS] AT SER-200; THR-400 AND SER-428</scope>
    <scope>IDENTIFICATION BY MASS SPECTROMETRY [LARGE SCALE ANALYSIS]</scope>
    <source>
        <tissue>Cervix carcinoma</tissue>
    </source>
</reference>
<reference key="4">
    <citation type="journal article" date="2008" name="Proc. Natl. Acad. Sci. U.S.A.">
        <title>A quantitative atlas of mitotic phosphorylation.</title>
        <authorList>
            <person name="Dephoure N."/>
            <person name="Zhou C."/>
            <person name="Villen J."/>
            <person name="Beausoleil S.A."/>
            <person name="Bakalarski C.E."/>
            <person name="Elledge S.J."/>
            <person name="Gygi S.P."/>
        </authorList>
    </citation>
    <scope>PHOSPHORYLATION [LARGE SCALE ANALYSIS] AT SER-193; SER-194; SER-196 AND SER-200</scope>
    <scope>PHOSPHORYLATION [LARGE SCALE ANALYSIS] AT THR-137 (ISOFORM 2)</scope>
    <scope>PHOSPHORYLATION [LARGE SCALE ANALYSIS] AT THR-172 (ISOFORM 3)</scope>
    <scope>PHOSPHORYLATION [LARGE SCALE ANALYSIS] AT THR-63 (ISOFORM 4)</scope>
    <scope>IDENTIFICATION BY MASS SPECTROMETRY [LARGE SCALE ANALYSIS]</scope>
    <source>
        <tissue>Cervix carcinoma</tissue>
    </source>
</reference>
<reference key="5">
    <citation type="journal article" date="2008" name="Proteomics">
        <title>Large-scale phosphoproteome analysis of human liver tissue by enrichment and fractionation of phosphopeptides with strong anion exchange chromatography.</title>
        <authorList>
            <person name="Han G."/>
            <person name="Ye M."/>
            <person name="Zhou H."/>
            <person name="Jiang X."/>
            <person name="Feng S."/>
            <person name="Jiang X."/>
            <person name="Tian R."/>
            <person name="Wan D."/>
            <person name="Zou H."/>
            <person name="Gu J."/>
        </authorList>
    </citation>
    <scope>PHOSPHORYLATION [LARGE SCALE ANALYSIS] AT SER-200</scope>
    <scope>IDENTIFICATION BY MASS SPECTROMETRY [LARGE SCALE ANALYSIS]</scope>
    <source>
        <tissue>Liver</tissue>
    </source>
</reference>
<reference key="6">
    <citation type="journal article" date="2009" name="Sci. Signal.">
        <title>Quantitative phosphoproteomic analysis of T cell receptor signaling reveals system-wide modulation of protein-protein interactions.</title>
        <authorList>
            <person name="Mayya V."/>
            <person name="Lundgren D.H."/>
            <person name="Hwang S.-I."/>
            <person name="Rezaul K."/>
            <person name="Wu L."/>
            <person name="Eng J.K."/>
            <person name="Rodionov V."/>
            <person name="Han D.K."/>
        </authorList>
    </citation>
    <scope>PHOSPHORYLATION [LARGE SCALE ANALYSIS] AT THR-137 (ISOFORM 2)</scope>
    <scope>PHOSPHORYLATION [LARGE SCALE ANALYSIS] AT THR-172 (ISOFORM 3)</scope>
    <scope>PHOSPHORYLATION [LARGE SCALE ANALYSIS] AT THR-63 (ISOFORM 4)</scope>
    <scope>IDENTIFICATION BY MASS SPECTROMETRY [LARGE SCALE ANALYSIS]</scope>
    <source>
        <tissue>Leukemic T-cell</tissue>
    </source>
</reference>
<reference key="7">
    <citation type="journal article" date="2013" name="J. Proteome Res.">
        <title>Toward a comprehensive characterization of a human cancer cell phosphoproteome.</title>
        <authorList>
            <person name="Zhou H."/>
            <person name="Di Palma S."/>
            <person name="Preisinger C."/>
            <person name="Peng M."/>
            <person name="Polat A.N."/>
            <person name="Heck A.J."/>
            <person name="Mohammed S."/>
        </authorList>
    </citation>
    <scope>PHOSPHORYLATION [LARGE SCALE ANALYSIS] AT SER-200</scope>
    <scope>IDENTIFICATION BY MASS SPECTROMETRY [LARGE SCALE ANALYSIS]</scope>
    <source>
        <tissue>Erythroleukemia</tissue>
    </source>
</reference>
<reference key="8">
    <citation type="journal article" date="2014" name="J. Cell Biol.">
        <title>Peroxisomal Atg37 binds Atg30 or palmitoyl-CoA to regulate phagophore formation during pexophagy.</title>
        <authorList>
            <person name="Nazarko T.Y."/>
            <person name="Ozeki K."/>
            <person name="Till A."/>
            <person name="Ramakrishnan G."/>
            <person name="Lotfi P."/>
            <person name="Yan M."/>
            <person name="Subramani S."/>
        </authorList>
    </citation>
    <scope>SUBCELLULAR LOCATION</scope>
    <scope>FUNCTION</scope>
</reference>
<reference key="9">
    <citation type="journal article" date="2004" name="Nat. Genet.">
        <title>Complete sequencing and characterization of 21,243 full-length human cDNAs.</title>
        <authorList>
            <person name="Ota T."/>
            <person name="Suzuki Y."/>
            <person name="Nishikawa T."/>
            <person name="Otsuki T."/>
            <person name="Sugiyama T."/>
            <person name="Irie R."/>
            <person name="Wakamatsu A."/>
            <person name="Hayashi K."/>
            <person name="Sato H."/>
            <person name="Nagai K."/>
            <person name="Kimura K."/>
            <person name="Makita H."/>
            <person name="Sekine M."/>
            <person name="Obayashi M."/>
            <person name="Nishi T."/>
            <person name="Shibahara T."/>
            <person name="Tanaka T."/>
            <person name="Ishii S."/>
            <person name="Yamamoto J."/>
            <person name="Saito K."/>
            <person name="Kawai Y."/>
            <person name="Isono Y."/>
            <person name="Nakamura Y."/>
            <person name="Nagahari K."/>
            <person name="Murakami K."/>
            <person name="Yasuda T."/>
            <person name="Iwayanagi T."/>
            <person name="Wagatsuma M."/>
            <person name="Shiratori A."/>
            <person name="Sudo H."/>
            <person name="Hosoiri T."/>
            <person name="Kaku Y."/>
            <person name="Kodaira H."/>
            <person name="Kondo H."/>
            <person name="Sugawara M."/>
            <person name="Takahashi M."/>
            <person name="Kanda K."/>
            <person name="Yokoi T."/>
            <person name="Furuya T."/>
            <person name="Kikkawa E."/>
            <person name="Omura Y."/>
            <person name="Abe K."/>
            <person name="Kamihara K."/>
            <person name="Katsuta N."/>
            <person name="Sato K."/>
            <person name="Tanikawa M."/>
            <person name="Yamazaki M."/>
            <person name="Ninomiya K."/>
            <person name="Ishibashi T."/>
            <person name="Yamashita H."/>
            <person name="Murakawa K."/>
            <person name="Fujimori K."/>
            <person name="Tanai H."/>
            <person name="Kimata M."/>
            <person name="Watanabe M."/>
            <person name="Hiraoka S."/>
            <person name="Chiba Y."/>
            <person name="Ishida S."/>
            <person name="Ono Y."/>
            <person name="Takiguchi S."/>
            <person name="Watanabe S."/>
            <person name="Yosida M."/>
            <person name="Hotuta T."/>
            <person name="Kusano J."/>
            <person name="Kanehori K."/>
            <person name="Takahashi-Fujii A."/>
            <person name="Hara H."/>
            <person name="Tanase T.-O."/>
            <person name="Nomura Y."/>
            <person name="Togiya S."/>
            <person name="Komai F."/>
            <person name="Hara R."/>
            <person name="Takeuchi K."/>
            <person name="Arita M."/>
            <person name="Imose N."/>
            <person name="Musashino K."/>
            <person name="Yuuki H."/>
            <person name="Oshima A."/>
            <person name="Sasaki N."/>
            <person name="Aotsuka S."/>
            <person name="Yoshikawa Y."/>
            <person name="Matsunawa H."/>
            <person name="Ichihara T."/>
            <person name="Shiohata N."/>
            <person name="Sano S."/>
            <person name="Moriya S."/>
            <person name="Momiyama H."/>
            <person name="Satoh N."/>
            <person name="Takami S."/>
            <person name="Terashima Y."/>
            <person name="Suzuki O."/>
            <person name="Nakagawa S."/>
            <person name="Senoh A."/>
            <person name="Mizoguchi H."/>
            <person name="Goto Y."/>
            <person name="Shimizu F."/>
            <person name="Wakebe H."/>
            <person name="Hishigaki H."/>
            <person name="Watanabe T."/>
            <person name="Sugiyama A."/>
            <person name="Takemoto M."/>
            <person name="Kawakami B."/>
            <person name="Yamazaki M."/>
            <person name="Watanabe K."/>
            <person name="Kumagai A."/>
            <person name="Itakura S."/>
            <person name="Fukuzumi Y."/>
            <person name="Fujimori Y."/>
            <person name="Komiyama M."/>
            <person name="Tashiro H."/>
            <person name="Tanigami A."/>
            <person name="Fujiwara T."/>
            <person name="Ono T."/>
            <person name="Yamada K."/>
            <person name="Fujii Y."/>
            <person name="Ozaki K."/>
            <person name="Hirao M."/>
            <person name="Ohmori Y."/>
            <person name="Kawabata A."/>
            <person name="Hikiji T."/>
            <person name="Kobatake N."/>
            <person name="Inagaki H."/>
            <person name="Ikema Y."/>
            <person name="Okamoto S."/>
            <person name="Okitani R."/>
            <person name="Kawakami T."/>
            <person name="Noguchi S."/>
            <person name="Itoh T."/>
            <person name="Shigeta K."/>
            <person name="Senba T."/>
            <person name="Matsumura K."/>
            <person name="Nakajima Y."/>
            <person name="Mizuno T."/>
            <person name="Morinaga M."/>
            <person name="Sasaki M."/>
            <person name="Togashi T."/>
            <person name="Oyama M."/>
            <person name="Hata H."/>
            <person name="Watanabe M."/>
            <person name="Komatsu T."/>
            <person name="Mizushima-Sugano J."/>
            <person name="Satoh T."/>
            <person name="Shirai Y."/>
            <person name="Takahashi Y."/>
            <person name="Nakagawa K."/>
            <person name="Okumura K."/>
            <person name="Nagase T."/>
            <person name="Nomura N."/>
            <person name="Kikuchi H."/>
            <person name="Masuho Y."/>
            <person name="Yamashita R."/>
            <person name="Nakai K."/>
            <person name="Yada T."/>
            <person name="Nakamura Y."/>
            <person name="Ohara O."/>
            <person name="Isogai T."/>
            <person name="Sugano S."/>
        </authorList>
    </citation>
    <scope>NUCLEOTIDE SEQUENCE [LARGE SCALE MRNA] (ISOFORM 2)</scope>
    <source>
        <tissue>Testis</tissue>
    </source>
</reference>
<reference key="10">
    <citation type="journal article" date="2004" name="Nature">
        <title>The DNA sequence and comparative analysis of human chromosome 10.</title>
        <authorList>
            <person name="Deloukas P."/>
            <person name="Earthrowl M.E."/>
            <person name="Grafham D.V."/>
            <person name="Rubenfield M."/>
            <person name="French L."/>
            <person name="Steward C.A."/>
            <person name="Sims S.K."/>
            <person name="Jones M.C."/>
            <person name="Searle S."/>
            <person name="Scott C."/>
            <person name="Howe K."/>
            <person name="Hunt S.E."/>
            <person name="Andrews T.D."/>
            <person name="Gilbert J.G.R."/>
            <person name="Swarbreck D."/>
            <person name="Ashurst J.L."/>
            <person name="Taylor A."/>
            <person name="Battles J."/>
            <person name="Bird C.P."/>
            <person name="Ainscough R."/>
            <person name="Almeida J.P."/>
            <person name="Ashwell R.I.S."/>
            <person name="Ambrose K.D."/>
            <person name="Babbage A.K."/>
            <person name="Bagguley C.L."/>
            <person name="Bailey J."/>
            <person name="Banerjee R."/>
            <person name="Bates K."/>
            <person name="Beasley H."/>
            <person name="Bray-Allen S."/>
            <person name="Brown A.J."/>
            <person name="Brown J.Y."/>
            <person name="Burford D.C."/>
            <person name="Burrill W."/>
            <person name="Burton J."/>
            <person name="Cahill P."/>
            <person name="Camire D."/>
            <person name="Carter N.P."/>
            <person name="Chapman J.C."/>
            <person name="Clark S.Y."/>
            <person name="Clarke G."/>
            <person name="Clee C.M."/>
            <person name="Clegg S."/>
            <person name="Corby N."/>
            <person name="Coulson A."/>
            <person name="Dhami P."/>
            <person name="Dutta I."/>
            <person name="Dunn M."/>
            <person name="Faulkner L."/>
            <person name="Frankish A."/>
            <person name="Frankland J.A."/>
            <person name="Garner P."/>
            <person name="Garnett J."/>
            <person name="Gribble S."/>
            <person name="Griffiths C."/>
            <person name="Grocock R."/>
            <person name="Gustafson E."/>
            <person name="Hammond S."/>
            <person name="Harley J.L."/>
            <person name="Hart E."/>
            <person name="Heath P.D."/>
            <person name="Ho T.P."/>
            <person name="Hopkins B."/>
            <person name="Horne J."/>
            <person name="Howden P.J."/>
            <person name="Huckle E."/>
            <person name="Hynds C."/>
            <person name="Johnson C."/>
            <person name="Johnson D."/>
            <person name="Kana A."/>
            <person name="Kay M."/>
            <person name="Kimberley A.M."/>
            <person name="Kershaw J.K."/>
            <person name="Kokkinaki M."/>
            <person name="Laird G.K."/>
            <person name="Lawlor S."/>
            <person name="Lee H.M."/>
            <person name="Leongamornlert D.A."/>
            <person name="Laird G."/>
            <person name="Lloyd C."/>
            <person name="Lloyd D.M."/>
            <person name="Loveland J."/>
            <person name="Lovell J."/>
            <person name="McLaren S."/>
            <person name="McLay K.E."/>
            <person name="McMurray A."/>
            <person name="Mashreghi-Mohammadi M."/>
            <person name="Matthews L."/>
            <person name="Milne S."/>
            <person name="Nickerson T."/>
            <person name="Nguyen M."/>
            <person name="Overton-Larty E."/>
            <person name="Palmer S.A."/>
            <person name="Pearce A.V."/>
            <person name="Peck A.I."/>
            <person name="Pelan S."/>
            <person name="Phillimore B."/>
            <person name="Porter K."/>
            <person name="Rice C.M."/>
            <person name="Rogosin A."/>
            <person name="Ross M.T."/>
            <person name="Sarafidou T."/>
            <person name="Sehra H.K."/>
            <person name="Shownkeen R."/>
            <person name="Skuce C.D."/>
            <person name="Smith M."/>
            <person name="Standring L."/>
            <person name="Sycamore N."/>
            <person name="Tester J."/>
            <person name="Thorpe A."/>
            <person name="Torcasso W."/>
            <person name="Tracey A."/>
            <person name="Tromans A."/>
            <person name="Tsolas J."/>
            <person name="Wall M."/>
            <person name="Walsh J."/>
            <person name="Wang H."/>
            <person name="Weinstock K."/>
            <person name="West A.P."/>
            <person name="Willey D.L."/>
            <person name="Whitehead S.L."/>
            <person name="Wilming L."/>
            <person name="Wray P.W."/>
            <person name="Young L."/>
            <person name="Chen Y."/>
            <person name="Lovering R.C."/>
            <person name="Moschonas N.K."/>
            <person name="Siebert R."/>
            <person name="Fechtel K."/>
            <person name="Bentley D."/>
            <person name="Durbin R.M."/>
            <person name="Hubbard T."/>
            <person name="Doucette-Stamm L."/>
            <person name="Beck S."/>
            <person name="Smith D.R."/>
            <person name="Rogers J."/>
        </authorList>
    </citation>
    <scope>NUCLEOTIDE SEQUENCE [LARGE SCALE GENOMIC DNA]</scope>
</reference>
<reference key="11">
    <citation type="submission" date="2005-09" db="EMBL/GenBank/DDBJ databases">
        <authorList>
            <person name="Mural R.J."/>
            <person name="Istrail S."/>
            <person name="Sutton G.G."/>
            <person name="Florea L."/>
            <person name="Halpern A.L."/>
            <person name="Mobarry C.M."/>
            <person name="Lippert R."/>
            <person name="Walenz B."/>
            <person name="Shatkay H."/>
            <person name="Dew I."/>
            <person name="Miller J.R."/>
            <person name="Flanigan M.J."/>
            <person name="Edwards N.J."/>
            <person name="Bolanos R."/>
            <person name="Fasulo D."/>
            <person name="Halldorsson B.V."/>
            <person name="Hannenhalli S."/>
            <person name="Turner R."/>
            <person name="Yooseph S."/>
            <person name="Lu F."/>
            <person name="Nusskern D.R."/>
            <person name="Shue B.C."/>
            <person name="Zheng X.H."/>
            <person name="Zhong F."/>
            <person name="Delcher A.L."/>
            <person name="Huson D.H."/>
            <person name="Kravitz S.A."/>
            <person name="Mouchard L."/>
            <person name="Reinert K."/>
            <person name="Remington K.A."/>
            <person name="Clark A.G."/>
            <person name="Waterman M.S."/>
            <person name="Eichler E.E."/>
            <person name="Adams M.D."/>
            <person name="Hunkapiller M.W."/>
            <person name="Myers E.W."/>
            <person name="Venter J.C."/>
        </authorList>
    </citation>
    <scope>NUCLEOTIDE SEQUENCE [LARGE SCALE GENOMIC DNA]</scope>
</reference>
<reference key="12">
    <citation type="journal article" date="2004" name="Genome Res.">
        <title>The status, quality, and expansion of the NIH full-length cDNA project: the Mammalian Gene Collection (MGC).</title>
        <authorList>
            <consortium name="The MGC Project Team"/>
        </authorList>
    </citation>
    <scope>NUCLEOTIDE SEQUENCE [LARGE SCALE MRNA] (ISOFORM 3)</scope>
    <source>
        <tissue>Blood</tissue>
    </source>
</reference>
<reference key="13">
    <citation type="journal article" date="2007" name="BMC Genomics">
        <title>The full-ORF clone resource of the German cDNA consortium.</title>
        <authorList>
            <person name="Bechtel S."/>
            <person name="Rosenfelder H."/>
            <person name="Duda A."/>
            <person name="Schmidt C.P."/>
            <person name="Ernst U."/>
            <person name="Wellenreuther R."/>
            <person name="Mehrle A."/>
            <person name="Schuster C."/>
            <person name="Bahr A."/>
            <person name="Bloecker H."/>
            <person name="Heubner D."/>
            <person name="Hoerlein A."/>
            <person name="Michel G."/>
            <person name="Wedler H."/>
            <person name="Koehrer K."/>
            <person name="Ottenwaelder B."/>
            <person name="Poustka A."/>
            <person name="Wiemann S."/>
            <person name="Schupp I."/>
        </authorList>
    </citation>
    <scope>NUCLEOTIDE SEQUENCE [LARGE SCALE MRNA] OF 252-534</scope>
    <source>
        <tissue>Testis</tissue>
    </source>
</reference>
<reference key="14">
    <citation type="journal article" date="2013" name="Genome Res.">
        <title>Autozygome-guided exome sequencing in retinal dystrophy patients reveals pathogenetic mutations and novel candidate disease genes.</title>
        <authorList>
            <person name="Abu-Safieh L."/>
            <person name="Alrashed M."/>
            <person name="Anazi S."/>
            <person name="Alkuraya H."/>
            <person name="Khan A.O."/>
            <person name="Al-Owain M."/>
            <person name="Al-Zahrani J."/>
            <person name="Al-Abdi L."/>
            <person name="Hashem M."/>
            <person name="Al-Tarimi S."/>
            <person name="Sebai M.A."/>
            <person name="Shamia A."/>
            <person name="Ray-Zack M.D."/>
            <person name="Nassan M."/>
            <person name="Al-Hassnan Z.N."/>
            <person name="Rahbeeni Z."/>
            <person name="Waheeb S."/>
            <person name="Alkharashi A."/>
            <person name="Abboud E."/>
            <person name="Al-Hazzaa S.A."/>
            <person name="Alkuraya F.S."/>
        </authorList>
    </citation>
    <scope>INVOLVEMENT IN RDLKD</scope>
</reference>
<reference key="15">
    <citation type="journal article" date="2014" name="J. Proteomics">
        <title>An enzyme assisted RP-RPLC approach for in-depth analysis of human liver phosphoproteome.</title>
        <authorList>
            <person name="Bian Y."/>
            <person name="Song C."/>
            <person name="Cheng K."/>
            <person name="Dong M."/>
            <person name="Wang F."/>
            <person name="Huang J."/>
            <person name="Sun D."/>
            <person name="Wang L."/>
            <person name="Ye M."/>
            <person name="Zou H."/>
        </authorList>
    </citation>
    <scope>PHOSPHORYLATION [LARGE SCALE ANALYSIS] AT SER-215; SER-279 AND SER-313</scope>
    <scope>IDENTIFICATION BY MASS SPECTROMETRY [LARGE SCALE ANALYSIS]</scope>
    <source>
        <tissue>Liver</tissue>
    </source>
</reference>
<reference key="16">
    <citation type="journal article" date="2017" name="J. Med. Genet.">
        <title>ACBD5 deficiency causes a defect in peroxisomal very long-chain fatty acid metabolism.</title>
        <authorList>
            <person name="Ferdinandusse S."/>
            <person name="Falkenberg K.D."/>
            <person name="Koster J."/>
            <person name="Mooyer P.A."/>
            <person name="Jones R."/>
            <person name="van Roermund C.W.T."/>
            <person name="Pizzino A."/>
            <person name="Schrader M."/>
            <person name="Wanders R.J.A."/>
            <person name="Vanderver A."/>
            <person name="Waterham H.R."/>
        </authorList>
    </citation>
    <scope>INVOLVEMENT IN RDLKD</scope>
</reference>
<reference key="17">
    <citation type="submission" date="2011-07" db="PDB data bank">
        <title>The crystal structure of human acyl-coenzyme A binding domain containing 5.</title>
        <authorList>
            <consortium name="Structural genomics consortium (SGC)"/>
        </authorList>
    </citation>
    <scope>X-RAY CRYSTALLOGRAPHY (1.7 ANGSTROMS) OF 41-136 IN COMPLEX WITH THE ACYL-COA ANALOGS COENZYME A AND STEARIC ACID</scope>
</reference>
<organism>
    <name type="scientific">Homo sapiens</name>
    <name type="common">Human</name>
    <dbReference type="NCBI Taxonomy" id="9606"/>
    <lineage>
        <taxon>Eukaryota</taxon>
        <taxon>Metazoa</taxon>
        <taxon>Chordata</taxon>
        <taxon>Craniata</taxon>
        <taxon>Vertebrata</taxon>
        <taxon>Euteleostomi</taxon>
        <taxon>Mammalia</taxon>
        <taxon>Eutheria</taxon>
        <taxon>Euarchontoglires</taxon>
        <taxon>Primates</taxon>
        <taxon>Haplorrhini</taxon>
        <taxon>Catarrhini</taxon>
        <taxon>Hominidae</taxon>
        <taxon>Homo</taxon>
    </lineage>
</organism>